<reference key="1">
    <citation type="journal article" date="1998" name="J. Gen. Virol.">
        <title>Comparative sequence analysis of American, European and Asian isolates of viruses in the genus Coltivirus.</title>
        <authorList>
            <person name="Attoui H."/>
            <person name="Charrel R.N."/>
            <person name="Billoir F."/>
            <person name="Cantaloube J.F."/>
            <person name="de Micco P."/>
            <person name="de Lamballerie X."/>
        </authorList>
    </citation>
    <scope>NUCLEOTIDE SEQUENCE [GENOMIC RNA]</scope>
    <source>
        <strain>JKT-6423</strain>
        <strain>JKT-6969</strain>
    </source>
</reference>
<reference key="2">
    <citation type="journal article" date="2005" name="J. Gen. Virol.">
        <title>Structural organization of an encephalitic human isolate of Banna virus (genus Seadornavirus, family Reoviridae).</title>
        <authorList>
            <person name="Mohd Jaafar F."/>
            <person name="Attoui H."/>
            <person name="Mertens P.P."/>
            <person name="de Micco P."/>
            <person name="de Lamballerie X."/>
        </authorList>
    </citation>
    <scope>SUBCELLULAR LOCATION</scope>
    <scope>FUNCTION</scope>
</reference>
<gene>
    <name type="primary">Segment-8</name>
    <name type="synonym">S8</name>
</gene>
<dbReference type="EMBL" id="AF052012">
    <property type="protein sequence ID" value="AAC72039.1"/>
    <property type="molecule type" value="Genomic_RNA"/>
</dbReference>
<dbReference type="EMBL" id="AF052017">
    <property type="protein sequence ID" value="AAC72044.1"/>
    <property type="molecule type" value="Genomic_RNA"/>
</dbReference>
<dbReference type="RefSeq" id="NP_694461.1">
    <property type="nucleotide sequence ID" value="NC_004203.1"/>
</dbReference>
<dbReference type="SMR" id="Q9YJJ8"/>
<dbReference type="KEGG" id="vg:995345"/>
<dbReference type="Proteomes" id="UP000000832">
    <property type="component" value="Genome"/>
</dbReference>
<dbReference type="Proteomes" id="UP000888320">
    <property type="component" value="Genome"/>
</dbReference>
<dbReference type="GO" id="GO:0019028">
    <property type="term" value="C:viral capsid"/>
    <property type="evidence" value="ECO:0007669"/>
    <property type="project" value="UniProtKB-KW"/>
</dbReference>
<dbReference type="InterPro" id="IPR026380">
    <property type="entry name" value="Seadorna_VP8"/>
</dbReference>
<dbReference type="NCBIfam" id="TIGR04233">
    <property type="entry name" value="seadorna_VP8"/>
    <property type="match status" value="1"/>
</dbReference>
<accession>Q9YJJ8</accession>
<keyword id="KW-0167">Capsid protein</keyword>
<keyword id="KW-1185">Reference proteome</keyword>
<keyword id="KW-0946">Virion</keyword>
<name>VP8_BANNV</name>
<evidence type="ECO:0000269" key="1">
    <source>
    </source>
</evidence>
<evidence type="ECO:0000303" key="2">
    <source>
    </source>
</evidence>
<proteinExistence type="predicted"/>
<comment type="function">
    <text evidence="2">Self assembles to form an icosahedral capsid with a T=13 symmetry, which consists of 230 trimers, with channels at each of its five-fold vertices.</text>
</comment>
<comment type="subcellular location">
    <subcellularLocation>
        <location evidence="1">Virion</location>
    </subcellularLocation>
</comment>
<sequence>MANRATSAFLDNPHPVGVNYVDEGSRQFVAVAELLASKLIASSRESDESNSDVPFVQAYSKFADDNPRHLRVKTGGKMANALTNVIRSYYSINAPAIVPQVEIDRLASKATVSGDMYNSYAVFNSVPIVEVLSPAQTTVSIVGSDRADVTMLNTGAGAANITFNFGQIAETVILKGSVPFQLARANQPMPAARFTYKLRPLDGPFIVVLPVGNPLVISATAATRIQVPLAFNKALVESGFQTAMNDGLFDAQNVNYYSSFDEFIIAQYHALDGINRVSTCVVLGLALQAYDQMRRALPVRRV</sequence>
<feature type="chain" id="PRO_0000404241" description="Intermediate capsid protein VP8">
    <location>
        <begin position="1"/>
        <end position="302"/>
    </location>
</feature>
<protein>
    <recommendedName>
        <fullName>Intermediate capsid protein VP8</fullName>
    </recommendedName>
    <alternativeName>
        <fullName>Virion protein 8</fullName>
        <shortName>VP8</shortName>
    </alternativeName>
</protein>
<organism>
    <name type="scientific">Banna virus</name>
    <name type="common">BAV</name>
    <dbReference type="NCBI Taxonomy" id="77763"/>
    <lineage>
        <taxon>Viruses</taxon>
        <taxon>Riboviria</taxon>
        <taxon>Orthornavirae</taxon>
        <taxon>Duplornaviricota</taxon>
        <taxon>Resentoviricetes</taxon>
        <taxon>Reovirales</taxon>
        <taxon>Sedoreoviridae</taxon>
        <taxon>Seadornavirus</taxon>
        <taxon>Seadornavirus bannaense</taxon>
    </lineage>
</organism>